<name>MNMG_ECOLC</name>
<proteinExistence type="inferred from homology"/>
<feature type="chain" id="PRO_1000076317" description="tRNA uridine 5-carboxymethylaminomethyl modification enzyme MnmG">
    <location>
        <begin position="1"/>
        <end position="629"/>
    </location>
</feature>
<feature type="binding site" evidence="1">
    <location>
        <begin position="13"/>
        <end position="18"/>
    </location>
    <ligand>
        <name>FAD</name>
        <dbReference type="ChEBI" id="CHEBI:57692"/>
    </ligand>
</feature>
<feature type="binding site" evidence="1">
    <location>
        <position position="125"/>
    </location>
    <ligand>
        <name>FAD</name>
        <dbReference type="ChEBI" id="CHEBI:57692"/>
    </ligand>
</feature>
<feature type="binding site" evidence="1">
    <location>
        <position position="180"/>
    </location>
    <ligand>
        <name>FAD</name>
        <dbReference type="ChEBI" id="CHEBI:57692"/>
    </ligand>
</feature>
<feature type="binding site" evidence="1">
    <location>
        <begin position="273"/>
        <end position="287"/>
    </location>
    <ligand>
        <name>NAD(+)</name>
        <dbReference type="ChEBI" id="CHEBI:57540"/>
    </ligand>
</feature>
<feature type="binding site" evidence="1">
    <location>
        <position position="370"/>
    </location>
    <ligand>
        <name>FAD</name>
        <dbReference type="ChEBI" id="CHEBI:57692"/>
    </ligand>
</feature>
<keyword id="KW-0963">Cytoplasm</keyword>
<keyword id="KW-0274">FAD</keyword>
<keyword id="KW-0285">Flavoprotein</keyword>
<keyword id="KW-0520">NAD</keyword>
<keyword id="KW-0819">tRNA processing</keyword>
<reference key="1">
    <citation type="submission" date="2008-02" db="EMBL/GenBank/DDBJ databases">
        <title>Complete sequence of Escherichia coli C str. ATCC 8739.</title>
        <authorList>
            <person name="Copeland A."/>
            <person name="Lucas S."/>
            <person name="Lapidus A."/>
            <person name="Glavina del Rio T."/>
            <person name="Dalin E."/>
            <person name="Tice H."/>
            <person name="Bruce D."/>
            <person name="Goodwin L."/>
            <person name="Pitluck S."/>
            <person name="Kiss H."/>
            <person name="Brettin T."/>
            <person name="Detter J.C."/>
            <person name="Han C."/>
            <person name="Kuske C.R."/>
            <person name="Schmutz J."/>
            <person name="Larimer F."/>
            <person name="Land M."/>
            <person name="Hauser L."/>
            <person name="Kyrpides N."/>
            <person name="Mikhailova N."/>
            <person name="Ingram L."/>
            <person name="Richardson P."/>
        </authorList>
    </citation>
    <scope>NUCLEOTIDE SEQUENCE [LARGE SCALE GENOMIC DNA]</scope>
    <source>
        <strain>ATCC 8739 / DSM 1576 / NBRC 3972 / NCIMB 8545 / WDCM 00012 / Crooks</strain>
    </source>
</reference>
<protein>
    <recommendedName>
        <fullName evidence="1">tRNA uridine 5-carboxymethylaminomethyl modification enzyme MnmG</fullName>
    </recommendedName>
    <alternativeName>
        <fullName evidence="1">Glucose-inhibited division protein A</fullName>
    </alternativeName>
</protein>
<dbReference type="EMBL" id="CP000946">
    <property type="protein sequence ID" value="ACA79849.1"/>
    <property type="molecule type" value="Genomic_DNA"/>
</dbReference>
<dbReference type="RefSeq" id="WP_000499788.1">
    <property type="nucleotide sequence ID" value="NZ_MTFT01000013.1"/>
</dbReference>
<dbReference type="SMR" id="B1IWZ7"/>
<dbReference type="GeneID" id="75205459"/>
<dbReference type="KEGG" id="ecl:EcolC_4253"/>
<dbReference type="HOGENOM" id="CLU_007831_2_2_6"/>
<dbReference type="GO" id="GO:0005829">
    <property type="term" value="C:cytosol"/>
    <property type="evidence" value="ECO:0007669"/>
    <property type="project" value="TreeGrafter"/>
</dbReference>
<dbReference type="GO" id="GO:0050660">
    <property type="term" value="F:flavin adenine dinucleotide binding"/>
    <property type="evidence" value="ECO:0007669"/>
    <property type="project" value="UniProtKB-UniRule"/>
</dbReference>
<dbReference type="GO" id="GO:0030488">
    <property type="term" value="P:tRNA methylation"/>
    <property type="evidence" value="ECO:0007669"/>
    <property type="project" value="TreeGrafter"/>
</dbReference>
<dbReference type="GO" id="GO:0002098">
    <property type="term" value="P:tRNA wobble uridine modification"/>
    <property type="evidence" value="ECO:0007669"/>
    <property type="project" value="InterPro"/>
</dbReference>
<dbReference type="FunFam" id="1.10.10.1800:FF:000001">
    <property type="entry name" value="tRNA uridine 5-carboxymethylaminomethyl modification enzyme MnmG"/>
    <property type="match status" value="1"/>
</dbReference>
<dbReference type="FunFam" id="1.10.150.570:FF:000001">
    <property type="entry name" value="tRNA uridine 5-carboxymethylaminomethyl modification enzyme MnmG"/>
    <property type="match status" value="1"/>
</dbReference>
<dbReference type="FunFam" id="3.50.50.60:FF:000002">
    <property type="entry name" value="tRNA uridine 5-carboxymethylaminomethyl modification enzyme MnmG"/>
    <property type="match status" value="1"/>
</dbReference>
<dbReference type="FunFam" id="3.50.50.60:FF:000010">
    <property type="entry name" value="tRNA uridine 5-carboxymethylaminomethyl modification enzyme MnmG"/>
    <property type="match status" value="1"/>
</dbReference>
<dbReference type="Gene3D" id="3.50.50.60">
    <property type="entry name" value="FAD/NAD(P)-binding domain"/>
    <property type="match status" value="2"/>
</dbReference>
<dbReference type="Gene3D" id="1.10.150.570">
    <property type="entry name" value="GidA associated domain, C-terminal subdomain"/>
    <property type="match status" value="1"/>
</dbReference>
<dbReference type="Gene3D" id="1.10.10.1800">
    <property type="entry name" value="tRNA uridine 5-carboxymethylaminomethyl modification enzyme MnmG/GidA"/>
    <property type="match status" value="1"/>
</dbReference>
<dbReference type="HAMAP" id="MF_00129">
    <property type="entry name" value="MnmG_GidA"/>
    <property type="match status" value="1"/>
</dbReference>
<dbReference type="InterPro" id="IPR036188">
    <property type="entry name" value="FAD/NAD-bd_sf"/>
</dbReference>
<dbReference type="InterPro" id="IPR049312">
    <property type="entry name" value="GIDA_C_N"/>
</dbReference>
<dbReference type="InterPro" id="IPR004416">
    <property type="entry name" value="MnmG"/>
</dbReference>
<dbReference type="InterPro" id="IPR002218">
    <property type="entry name" value="MnmG-rel"/>
</dbReference>
<dbReference type="InterPro" id="IPR020595">
    <property type="entry name" value="MnmG-rel_CS"/>
</dbReference>
<dbReference type="InterPro" id="IPR026904">
    <property type="entry name" value="MnmG_C"/>
</dbReference>
<dbReference type="InterPro" id="IPR047001">
    <property type="entry name" value="MnmG_C_subdom"/>
</dbReference>
<dbReference type="InterPro" id="IPR044920">
    <property type="entry name" value="MnmG_C_subdom_sf"/>
</dbReference>
<dbReference type="InterPro" id="IPR040131">
    <property type="entry name" value="MnmG_N"/>
</dbReference>
<dbReference type="NCBIfam" id="TIGR00136">
    <property type="entry name" value="mnmG_gidA"/>
    <property type="match status" value="1"/>
</dbReference>
<dbReference type="PANTHER" id="PTHR11806">
    <property type="entry name" value="GLUCOSE INHIBITED DIVISION PROTEIN A"/>
    <property type="match status" value="1"/>
</dbReference>
<dbReference type="PANTHER" id="PTHR11806:SF0">
    <property type="entry name" value="PROTEIN MTO1 HOMOLOG, MITOCHONDRIAL"/>
    <property type="match status" value="1"/>
</dbReference>
<dbReference type="Pfam" id="PF01134">
    <property type="entry name" value="GIDA"/>
    <property type="match status" value="1"/>
</dbReference>
<dbReference type="Pfam" id="PF21680">
    <property type="entry name" value="GIDA_C_1st"/>
    <property type="match status" value="1"/>
</dbReference>
<dbReference type="Pfam" id="PF13932">
    <property type="entry name" value="SAM_GIDA_C"/>
    <property type="match status" value="1"/>
</dbReference>
<dbReference type="SMART" id="SM01228">
    <property type="entry name" value="GIDA_assoc_3"/>
    <property type="match status" value="1"/>
</dbReference>
<dbReference type="SUPFAM" id="SSF51905">
    <property type="entry name" value="FAD/NAD(P)-binding domain"/>
    <property type="match status" value="1"/>
</dbReference>
<dbReference type="PROSITE" id="PS01280">
    <property type="entry name" value="GIDA_1"/>
    <property type="match status" value="1"/>
</dbReference>
<dbReference type="PROSITE" id="PS01281">
    <property type="entry name" value="GIDA_2"/>
    <property type="match status" value="1"/>
</dbReference>
<accession>B1IWZ7</accession>
<gene>
    <name evidence="1" type="primary">mnmG</name>
    <name evidence="1" type="synonym">gidA</name>
    <name type="ordered locus">EcolC_4253</name>
</gene>
<organism>
    <name type="scientific">Escherichia coli (strain ATCC 8739 / DSM 1576 / NBRC 3972 / NCIMB 8545 / WDCM 00012 / Crooks)</name>
    <dbReference type="NCBI Taxonomy" id="481805"/>
    <lineage>
        <taxon>Bacteria</taxon>
        <taxon>Pseudomonadati</taxon>
        <taxon>Pseudomonadota</taxon>
        <taxon>Gammaproteobacteria</taxon>
        <taxon>Enterobacterales</taxon>
        <taxon>Enterobacteriaceae</taxon>
        <taxon>Escherichia</taxon>
    </lineage>
</organism>
<evidence type="ECO:0000255" key="1">
    <source>
        <dbReference type="HAMAP-Rule" id="MF_00129"/>
    </source>
</evidence>
<sequence length="629" mass="69521">MFYPDPFDVIIIGGGHAGTEAAMAAARMGQQTLLLTHNIDTLGQMSCNPAIGGIGKGHLVKEVDALGGLMAKAIDQAGIQFRILNASKGPAVRATRAQADRVLYRQAVRTALENQPNLMIFQQAVEDLIVENDRVVGAVTQMGLKFRAKAVVLTVGTFLDGKIHIGLDNYSGGRAGDPPSIPLSRRLRELPLRVGRLKTGTPPRIDARTIDFSVLAQQHGDNPMPVFSFMGNASQHPQQVPCYITHTNEKTHDVIRSNLDRSPMYAGVIEGVGPRYCPSIEDKVMRFADRNQHQIFLEPEGLTSNEIYPNGISTSLPFDVQMQIVRSMQGMENAKIVRPGYAIEYDFFDPRDLKPTLESKFIQGLFFAGQINGTTGYEEAAAQGLLAGLNAARLSADKEGWAPARSQAYLGVLVDDLCTLGTKEPYRMFTSRAEYRLMLREDNADLRLTEIGRELGLVDDERWARFNEKLENIERERQRLKSTWVTPSAEAAAEVNAHLTAPLSREASGEDLLRRPEMTYEKLTTLTPFAPALTDEQAAEQVEIQVKYEGYIARQQDEIEKQLRNENTLLPATLDYRQVSGLSNEVIAKLNDHKPASIGQASRISGVTPAAISILLVWLKKQGMLRRSA</sequence>
<comment type="function">
    <text evidence="1">NAD-binding protein involved in the addition of a carboxymethylaminomethyl (cmnm) group at the wobble position (U34) of certain tRNAs, forming tRNA-cmnm(5)s(2)U34.</text>
</comment>
<comment type="cofactor">
    <cofactor evidence="1">
        <name>FAD</name>
        <dbReference type="ChEBI" id="CHEBI:57692"/>
    </cofactor>
</comment>
<comment type="subunit">
    <text evidence="1">Homodimer. Heterotetramer of two MnmE and two MnmG subunits.</text>
</comment>
<comment type="subcellular location">
    <subcellularLocation>
        <location evidence="1">Cytoplasm</location>
    </subcellularLocation>
</comment>
<comment type="similarity">
    <text evidence="1">Belongs to the MnmG family.</text>
</comment>